<keyword id="KW-1185">Reference proteome</keyword>
<proteinExistence type="predicted"/>
<gene>
    <name type="ORF">DDB_G0289263</name>
</gene>
<dbReference type="EMBL" id="AAFI02000132">
    <property type="protein sequence ID" value="EAL62819.1"/>
    <property type="status" value="ALT_SEQ"/>
    <property type="molecule type" value="Genomic_DNA"/>
</dbReference>
<dbReference type="RefSeq" id="XP_636260.1">
    <property type="nucleotide sequence ID" value="XM_631168.1"/>
</dbReference>
<dbReference type="STRING" id="44689.Q54HS1"/>
<dbReference type="PaxDb" id="44689-DDB0219416"/>
<dbReference type="EnsemblProtists" id="EAL62819">
    <property type="protein sequence ID" value="EAL62819"/>
    <property type="gene ID" value="DDB_G0289263"/>
</dbReference>
<dbReference type="GeneID" id="8627042"/>
<dbReference type="KEGG" id="ddi:DDB_G0289263"/>
<dbReference type="dictyBase" id="DDB_G0289263"/>
<dbReference type="VEuPathDB" id="AmoebaDB:DDB_G0289263"/>
<dbReference type="eggNOG" id="ENOG502SYEW">
    <property type="taxonomic scope" value="Eukaryota"/>
</dbReference>
<dbReference type="InParanoid" id="Q54HS1"/>
<dbReference type="PRO" id="PR:Q54HS1"/>
<dbReference type="Proteomes" id="UP000002195">
    <property type="component" value="Chromosome 5"/>
</dbReference>
<feature type="chain" id="PRO_0000346952" description="Putative uncharacterized protein DDB_G0289263">
    <location>
        <begin position="1"/>
        <end position="932"/>
    </location>
</feature>
<feature type="region of interest" description="Disordered" evidence="1">
    <location>
        <begin position="26"/>
        <end position="120"/>
    </location>
</feature>
<feature type="region of interest" description="Disordered" evidence="1">
    <location>
        <begin position="158"/>
        <end position="289"/>
    </location>
</feature>
<feature type="region of interest" description="Disordered" evidence="1">
    <location>
        <begin position="304"/>
        <end position="617"/>
    </location>
</feature>
<feature type="region of interest" description="Disordered" evidence="1">
    <location>
        <begin position="635"/>
        <end position="720"/>
    </location>
</feature>
<feature type="region of interest" description="Disordered" evidence="1">
    <location>
        <begin position="802"/>
        <end position="863"/>
    </location>
</feature>
<feature type="compositionally biased region" description="Low complexity" evidence="1">
    <location>
        <begin position="41"/>
        <end position="105"/>
    </location>
</feature>
<feature type="compositionally biased region" description="Low complexity" evidence="1">
    <location>
        <begin position="163"/>
        <end position="241"/>
    </location>
</feature>
<feature type="compositionally biased region" description="Polar residues" evidence="1">
    <location>
        <begin position="242"/>
        <end position="253"/>
    </location>
</feature>
<feature type="compositionally biased region" description="Acidic residues" evidence="1">
    <location>
        <begin position="265"/>
        <end position="285"/>
    </location>
</feature>
<feature type="compositionally biased region" description="Low complexity" evidence="1">
    <location>
        <begin position="304"/>
        <end position="475"/>
    </location>
</feature>
<feature type="compositionally biased region" description="Polar residues" evidence="1">
    <location>
        <begin position="476"/>
        <end position="492"/>
    </location>
</feature>
<feature type="compositionally biased region" description="Polar residues" evidence="1">
    <location>
        <begin position="527"/>
        <end position="540"/>
    </location>
</feature>
<feature type="compositionally biased region" description="Low complexity" evidence="1">
    <location>
        <begin position="548"/>
        <end position="590"/>
    </location>
</feature>
<feature type="compositionally biased region" description="Basic and acidic residues" evidence="1">
    <location>
        <begin position="606"/>
        <end position="617"/>
    </location>
</feature>
<feature type="compositionally biased region" description="Low complexity" evidence="1">
    <location>
        <begin position="635"/>
        <end position="666"/>
    </location>
</feature>
<feature type="compositionally biased region" description="Low complexity" evidence="1">
    <location>
        <begin position="696"/>
        <end position="707"/>
    </location>
</feature>
<feature type="compositionally biased region" description="Low complexity" evidence="1">
    <location>
        <begin position="813"/>
        <end position="853"/>
    </location>
</feature>
<feature type="compositionally biased region" description="Basic and acidic residues" evidence="1">
    <location>
        <begin position="854"/>
        <end position="863"/>
    </location>
</feature>
<reference key="1">
    <citation type="journal article" date="2005" name="Nature">
        <title>The genome of the social amoeba Dictyostelium discoideum.</title>
        <authorList>
            <person name="Eichinger L."/>
            <person name="Pachebat J.A."/>
            <person name="Gloeckner G."/>
            <person name="Rajandream M.A."/>
            <person name="Sucgang R."/>
            <person name="Berriman M."/>
            <person name="Song J."/>
            <person name="Olsen R."/>
            <person name="Szafranski K."/>
            <person name="Xu Q."/>
            <person name="Tunggal B."/>
            <person name="Kummerfeld S."/>
            <person name="Madera M."/>
            <person name="Konfortov B.A."/>
            <person name="Rivero F."/>
            <person name="Bankier A.T."/>
            <person name="Lehmann R."/>
            <person name="Hamlin N."/>
            <person name="Davies R."/>
            <person name="Gaudet P."/>
            <person name="Fey P."/>
            <person name="Pilcher K."/>
            <person name="Chen G."/>
            <person name="Saunders D."/>
            <person name="Sodergren E.J."/>
            <person name="Davis P."/>
            <person name="Kerhornou A."/>
            <person name="Nie X."/>
            <person name="Hall N."/>
            <person name="Anjard C."/>
            <person name="Hemphill L."/>
            <person name="Bason N."/>
            <person name="Farbrother P."/>
            <person name="Desany B."/>
            <person name="Just E."/>
            <person name="Morio T."/>
            <person name="Rost R."/>
            <person name="Churcher C.M."/>
            <person name="Cooper J."/>
            <person name="Haydock S."/>
            <person name="van Driessche N."/>
            <person name="Cronin A."/>
            <person name="Goodhead I."/>
            <person name="Muzny D.M."/>
            <person name="Mourier T."/>
            <person name="Pain A."/>
            <person name="Lu M."/>
            <person name="Harper D."/>
            <person name="Lindsay R."/>
            <person name="Hauser H."/>
            <person name="James K.D."/>
            <person name="Quiles M."/>
            <person name="Madan Babu M."/>
            <person name="Saito T."/>
            <person name="Buchrieser C."/>
            <person name="Wardroper A."/>
            <person name="Felder M."/>
            <person name="Thangavelu M."/>
            <person name="Johnson D."/>
            <person name="Knights A."/>
            <person name="Loulseged H."/>
            <person name="Mungall K.L."/>
            <person name="Oliver K."/>
            <person name="Price C."/>
            <person name="Quail M.A."/>
            <person name="Urushihara H."/>
            <person name="Hernandez J."/>
            <person name="Rabbinowitsch E."/>
            <person name="Steffen D."/>
            <person name="Sanders M."/>
            <person name="Ma J."/>
            <person name="Kohara Y."/>
            <person name="Sharp S."/>
            <person name="Simmonds M.N."/>
            <person name="Spiegler S."/>
            <person name="Tivey A."/>
            <person name="Sugano S."/>
            <person name="White B."/>
            <person name="Walker D."/>
            <person name="Woodward J.R."/>
            <person name="Winckler T."/>
            <person name="Tanaka Y."/>
            <person name="Shaulsky G."/>
            <person name="Schleicher M."/>
            <person name="Weinstock G.M."/>
            <person name="Rosenthal A."/>
            <person name="Cox E.C."/>
            <person name="Chisholm R.L."/>
            <person name="Gibbs R.A."/>
            <person name="Loomis W.F."/>
            <person name="Platzer M."/>
            <person name="Kay R.R."/>
            <person name="Williams J.G."/>
            <person name="Dear P.H."/>
            <person name="Noegel A.A."/>
            <person name="Barrell B.G."/>
            <person name="Kuspa A."/>
        </authorList>
    </citation>
    <scope>NUCLEOTIDE SEQUENCE [LARGE SCALE GENOMIC DNA]</scope>
    <source>
        <strain>AX4</strain>
    </source>
</reference>
<protein>
    <recommendedName>
        <fullName>Putative uncharacterized protein DDB_G0289263</fullName>
    </recommendedName>
</protein>
<evidence type="ECO:0000256" key="1">
    <source>
        <dbReference type="SAM" id="MobiDB-lite"/>
    </source>
</evidence>
<evidence type="ECO:0000305" key="2"/>
<organism>
    <name type="scientific">Dictyostelium discoideum</name>
    <name type="common">Social amoeba</name>
    <dbReference type="NCBI Taxonomy" id="44689"/>
    <lineage>
        <taxon>Eukaryota</taxon>
        <taxon>Amoebozoa</taxon>
        <taxon>Evosea</taxon>
        <taxon>Eumycetozoa</taxon>
        <taxon>Dictyostelia</taxon>
        <taxon>Dictyosteliales</taxon>
        <taxon>Dictyosteliaceae</taxon>
        <taxon>Dictyostelium</taxon>
    </lineage>
</organism>
<accession>Q54HS1</accession>
<comment type="sequence caution" evidence="2">
    <conflict type="erroneous gene model prediction">
        <sequence resource="EMBL-CDS" id="EAL62819"/>
    </conflict>
</comment>
<name>Y9416_DICDI</name>
<sequence>MVNTLYNNNNGNNNIINNNNNNGFNNINNGQNLHRLENGHNNNIANSNNINNNNNISGNIVNNNNNNNNNNSNNNNNNNNNNNNNNNNNSNNSNNSNNINNIISSDGRRRGSINKSNMLTHSNLSNNLKIRNKLANQIDNEEKRQHILGKNLIKLTNMGIGPNNNNHNNHQNNNNSNNNNNNNNNNNNNNNNNNNNNNNNNNNNNNNNNNNNNNNNNNLVINNNKNNYINYNNGGNNYGNNTPVNYIHNNSTPRPRHSSLRTNLSDEEDSVLYSSDDSEESDYEEEEKKHLKYANRNFSGVLNNNNNINNNNMNNNINYNFNNNNNNVNNVNINNNNNNNSSNNNNNNSNNNNQLYNNHNNGNPNFYINNNNNNSNNIGHNNNNNNNNVNNNNISNNNNLNNFNNYNYNNNNNNNNNNNNNNNNNNNNNNNNNNNNNNNNNNNNNNNNNNNNNNNNNNNNNNNNNNNNNNNNNNNENYVGSSLSNSADNTESSKWRIYPSTRARQRSIASEEDSLGSRRSSLGSANDIPNSYPISPTKQQLLHYGMQSPVYSPPNNLSPLSSPYLHHNSNNNSNNGGGNSNNNNTNFNYGGNIGLERPKTSPLSYGERDPPHVINHDRRLKTPSFIDDINENNLQQSQHQHQQQQQQPQSQQQPFYSPYQSPPSSSHGNRPKTPKIISTPEGYIISSDDGSRLVVSPPNTSISSLSSMVDDNHHNQPPLVPNFSSFQQQQQLRQLQQQQLHQQQLLQQQQQQQQQQQQVPTHQQQSQSRPQTPIYLSQQQPQNPIDLMSNRRLNSAQNMKLSVSSPQLGRDVNSSNNNKNISNNNNNNNNNNNNNNNNNNNNNNKNNNINNNSEPKKPKFPLEDEKLDRDQLINEYKESSLRLDLFVNSLDEYDQQQRDISDIDNYIYNLCLCNNLEKHDSKEDEMLFDPNL</sequence>